<organism>
    <name type="scientific">Bacillus velezensis (strain DSM 23117 / BGSC 10A6 / LMG 26770 / FZB42)</name>
    <name type="common">Bacillus amyloliquefaciens subsp. plantarum</name>
    <dbReference type="NCBI Taxonomy" id="326423"/>
    <lineage>
        <taxon>Bacteria</taxon>
        <taxon>Bacillati</taxon>
        <taxon>Bacillota</taxon>
        <taxon>Bacilli</taxon>
        <taxon>Bacillales</taxon>
        <taxon>Bacillaceae</taxon>
        <taxon>Bacillus</taxon>
        <taxon>Bacillus amyloliquefaciens group</taxon>
    </lineage>
</organism>
<dbReference type="EMBL" id="CP000560">
    <property type="protein sequence ID" value="ABS72583.1"/>
    <property type="molecule type" value="Genomic_DNA"/>
</dbReference>
<dbReference type="RefSeq" id="WP_007410405.1">
    <property type="nucleotide sequence ID" value="NC_009725.2"/>
</dbReference>
<dbReference type="SMR" id="A7Z0Q7"/>
<dbReference type="GeneID" id="93079299"/>
<dbReference type="KEGG" id="bay:RBAM_001600"/>
<dbReference type="HOGENOM" id="CLU_055188_4_2_9"/>
<dbReference type="Proteomes" id="UP000001120">
    <property type="component" value="Chromosome"/>
</dbReference>
<dbReference type="GO" id="GO:0022625">
    <property type="term" value="C:cytosolic large ribosomal subunit"/>
    <property type="evidence" value="ECO:0007669"/>
    <property type="project" value="TreeGrafter"/>
</dbReference>
<dbReference type="GO" id="GO:0019843">
    <property type="term" value="F:rRNA binding"/>
    <property type="evidence" value="ECO:0007669"/>
    <property type="project" value="UniProtKB-UniRule"/>
</dbReference>
<dbReference type="GO" id="GO:0003735">
    <property type="term" value="F:structural constituent of ribosome"/>
    <property type="evidence" value="ECO:0007669"/>
    <property type="project" value="InterPro"/>
</dbReference>
<dbReference type="GO" id="GO:0006412">
    <property type="term" value="P:translation"/>
    <property type="evidence" value="ECO:0007669"/>
    <property type="project" value="UniProtKB-UniRule"/>
</dbReference>
<dbReference type="FunFam" id="3.100.10.10:FF:000004">
    <property type="entry name" value="50S ribosomal protein L15"/>
    <property type="match status" value="1"/>
</dbReference>
<dbReference type="Gene3D" id="3.100.10.10">
    <property type="match status" value="1"/>
</dbReference>
<dbReference type="HAMAP" id="MF_01341">
    <property type="entry name" value="Ribosomal_uL15"/>
    <property type="match status" value="1"/>
</dbReference>
<dbReference type="InterPro" id="IPR030878">
    <property type="entry name" value="Ribosomal_uL15"/>
</dbReference>
<dbReference type="InterPro" id="IPR021131">
    <property type="entry name" value="Ribosomal_uL15/eL18"/>
</dbReference>
<dbReference type="InterPro" id="IPR036227">
    <property type="entry name" value="Ribosomal_uL15/eL18_sf"/>
</dbReference>
<dbReference type="InterPro" id="IPR005749">
    <property type="entry name" value="Ribosomal_uL15_bac-type"/>
</dbReference>
<dbReference type="InterPro" id="IPR001196">
    <property type="entry name" value="Ribosomal_uL15_CS"/>
</dbReference>
<dbReference type="NCBIfam" id="TIGR01071">
    <property type="entry name" value="rplO_bact"/>
    <property type="match status" value="1"/>
</dbReference>
<dbReference type="PANTHER" id="PTHR12934">
    <property type="entry name" value="50S RIBOSOMAL PROTEIN L15"/>
    <property type="match status" value="1"/>
</dbReference>
<dbReference type="PANTHER" id="PTHR12934:SF11">
    <property type="entry name" value="LARGE RIBOSOMAL SUBUNIT PROTEIN UL15M"/>
    <property type="match status" value="1"/>
</dbReference>
<dbReference type="Pfam" id="PF00828">
    <property type="entry name" value="Ribosomal_L27A"/>
    <property type="match status" value="1"/>
</dbReference>
<dbReference type="SUPFAM" id="SSF52080">
    <property type="entry name" value="Ribosomal proteins L15p and L18e"/>
    <property type="match status" value="1"/>
</dbReference>
<dbReference type="PROSITE" id="PS00475">
    <property type="entry name" value="RIBOSOMAL_L15"/>
    <property type="match status" value="1"/>
</dbReference>
<feature type="chain" id="PRO_1000054425" description="Large ribosomal subunit protein uL15">
    <location>
        <begin position="1"/>
        <end position="146"/>
    </location>
</feature>
<feature type="region of interest" description="Disordered" evidence="2">
    <location>
        <begin position="1"/>
        <end position="54"/>
    </location>
</feature>
<feature type="compositionally biased region" description="Basic and acidic residues" evidence="2">
    <location>
        <begin position="1"/>
        <end position="13"/>
    </location>
</feature>
<feature type="compositionally biased region" description="Gly residues" evidence="2">
    <location>
        <begin position="21"/>
        <end position="31"/>
    </location>
</feature>
<feature type="compositionally biased region" description="Gly residues" evidence="2">
    <location>
        <begin position="42"/>
        <end position="52"/>
    </location>
</feature>
<sequence length="146" mass="15367">MKLHELKPSEGSRKVRNRVGRGIGSGNGKTAGKGHKGQNARSGGGVRPGFEGGQMPLFQRLPKRGFTNINRKDYAIVNVDKLNGFAEGTEVTPELLLETGVISKLNAGVKILGNGKLEKKLTVKANKFSASAKEAVEAAGGTAEVI</sequence>
<protein>
    <recommendedName>
        <fullName evidence="1">Large ribosomal subunit protein uL15</fullName>
    </recommendedName>
    <alternativeName>
        <fullName evidence="3">50S ribosomal protein L15</fullName>
    </alternativeName>
</protein>
<accession>A7Z0Q7</accession>
<comment type="function">
    <text evidence="1">Binds to the 23S rRNA.</text>
</comment>
<comment type="subunit">
    <text evidence="1">Part of the 50S ribosomal subunit.</text>
</comment>
<comment type="similarity">
    <text evidence="1">Belongs to the universal ribosomal protein uL15 family.</text>
</comment>
<gene>
    <name evidence="1" type="primary">rplO</name>
    <name type="ordered locus">RBAM_001600</name>
</gene>
<name>RL15_BACVZ</name>
<reference key="1">
    <citation type="journal article" date="2007" name="Nat. Biotechnol.">
        <title>Comparative analysis of the complete genome sequence of the plant growth-promoting bacterium Bacillus amyloliquefaciens FZB42.</title>
        <authorList>
            <person name="Chen X.H."/>
            <person name="Koumoutsi A."/>
            <person name="Scholz R."/>
            <person name="Eisenreich A."/>
            <person name="Schneider K."/>
            <person name="Heinemeyer I."/>
            <person name="Morgenstern B."/>
            <person name="Voss B."/>
            <person name="Hess W.R."/>
            <person name="Reva O."/>
            <person name="Junge H."/>
            <person name="Voigt B."/>
            <person name="Jungblut P.R."/>
            <person name="Vater J."/>
            <person name="Suessmuth R."/>
            <person name="Liesegang H."/>
            <person name="Strittmatter A."/>
            <person name="Gottschalk G."/>
            <person name="Borriss R."/>
        </authorList>
    </citation>
    <scope>NUCLEOTIDE SEQUENCE [LARGE SCALE GENOMIC DNA]</scope>
    <source>
        <strain>DSM 23117 / BGSC 10A6 / LMG 26770 / FZB42</strain>
    </source>
</reference>
<proteinExistence type="inferred from homology"/>
<evidence type="ECO:0000255" key="1">
    <source>
        <dbReference type="HAMAP-Rule" id="MF_01341"/>
    </source>
</evidence>
<evidence type="ECO:0000256" key="2">
    <source>
        <dbReference type="SAM" id="MobiDB-lite"/>
    </source>
</evidence>
<evidence type="ECO:0000305" key="3"/>
<keyword id="KW-0687">Ribonucleoprotein</keyword>
<keyword id="KW-0689">Ribosomal protein</keyword>
<keyword id="KW-0694">RNA-binding</keyword>
<keyword id="KW-0699">rRNA-binding</keyword>